<organism>
    <name type="scientific">Azobacteroides pseudotrichonymphae genomovar. CFP2</name>
    <dbReference type="NCBI Taxonomy" id="511995"/>
    <lineage>
        <taxon>Bacteria</taxon>
        <taxon>Pseudomonadati</taxon>
        <taxon>Bacteroidota</taxon>
        <taxon>Bacteroidia</taxon>
        <taxon>Bacteroidales</taxon>
        <taxon>Candidatus Azobacteroides</taxon>
    </lineage>
</organism>
<feature type="chain" id="PRO_1000099090" description="GTPase Der">
    <location>
        <begin position="1"/>
        <end position="437"/>
    </location>
</feature>
<feature type="domain" description="EngA-type G 1">
    <location>
        <begin position="3"/>
        <end position="167"/>
    </location>
</feature>
<feature type="domain" description="EngA-type G 2">
    <location>
        <begin position="176"/>
        <end position="352"/>
    </location>
</feature>
<feature type="domain" description="KH-like" evidence="1">
    <location>
        <begin position="353"/>
        <end position="437"/>
    </location>
</feature>
<feature type="binding site" evidence="1">
    <location>
        <begin position="9"/>
        <end position="16"/>
    </location>
    <ligand>
        <name>GTP</name>
        <dbReference type="ChEBI" id="CHEBI:37565"/>
        <label>1</label>
    </ligand>
</feature>
<feature type="binding site" evidence="1">
    <location>
        <begin position="56"/>
        <end position="60"/>
    </location>
    <ligand>
        <name>GTP</name>
        <dbReference type="ChEBI" id="CHEBI:37565"/>
        <label>1</label>
    </ligand>
</feature>
<feature type="binding site" evidence="1">
    <location>
        <begin position="119"/>
        <end position="122"/>
    </location>
    <ligand>
        <name>GTP</name>
        <dbReference type="ChEBI" id="CHEBI:37565"/>
        <label>1</label>
    </ligand>
</feature>
<feature type="binding site" evidence="1">
    <location>
        <begin position="182"/>
        <end position="189"/>
    </location>
    <ligand>
        <name>GTP</name>
        <dbReference type="ChEBI" id="CHEBI:37565"/>
        <label>2</label>
    </ligand>
</feature>
<feature type="binding site" evidence="1">
    <location>
        <begin position="229"/>
        <end position="233"/>
    </location>
    <ligand>
        <name>GTP</name>
        <dbReference type="ChEBI" id="CHEBI:37565"/>
        <label>2</label>
    </ligand>
</feature>
<feature type="binding site" evidence="1">
    <location>
        <begin position="294"/>
        <end position="297"/>
    </location>
    <ligand>
        <name>GTP</name>
        <dbReference type="ChEBI" id="CHEBI:37565"/>
        <label>2</label>
    </ligand>
</feature>
<name>DER_AZOPC</name>
<sequence>MNNIVAIVGRPNVGKSTLFNRLTQSHQAIVDEEEGTTRDRQYSKVEWCGQIFSIIDTGGWVLNSDDIFEEEINKQVQIAIEEADIILFLVDVIHGTTDLDQQIAALLRREKKLVILVSNKADNYKLYAQSAEFYALGLGDPYNVSAINGSGTGELLDYLISNFTKKVDNKPEITIPAIAIVGKPNVGKSSLINALTNEERNIVTNIAGTTRDSIYTLYDKFGLKFYLVDTAGICKKKKVEENSEYYSIIRAIRSIESSDICILLIDATQCIMAQDINIFSIIQKNEKGLIIVVNKWDLIQNKNPKTIYTFENAIRQRTAPFTDVPIIFSSAQTKKRIYKILQVAKEVYDIRQIKIPTSQLNRILLPIIAKTPPPINKGKVVRIKYVTQLTNTIIPSFVFFCNLPKWIKTPYKRFLENQMRKNWKLTGTPINIFMREK</sequence>
<gene>
    <name evidence="1" type="primary">der</name>
    <name type="synonym">engA</name>
    <name type="ordered locus">CFPG_128</name>
</gene>
<keyword id="KW-0342">GTP-binding</keyword>
<keyword id="KW-0547">Nucleotide-binding</keyword>
<keyword id="KW-1185">Reference proteome</keyword>
<keyword id="KW-0677">Repeat</keyword>
<keyword id="KW-0690">Ribosome biogenesis</keyword>
<protein>
    <recommendedName>
        <fullName evidence="1">GTPase Der</fullName>
    </recommendedName>
    <alternativeName>
        <fullName evidence="1">GTP-binding protein EngA</fullName>
    </alternativeName>
</protein>
<dbReference type="EMBL" id="AP010656">
    <property type="protein sequence ID" value="BAG83391.1"/>
    <property type="molecule type" value="Genomic_DNA"/>
</dbReference>
<dbReference type="RefSeq" id="WP_012573152.1">
    <property type="nucleotide sequence ID" value="NC_011565.1"/>
</dbReference>
<dbReference type="SMR" id="B6YQB9"/>
<dbReference type="STRING" id="511995.CFPG_128"/>
<dbReference type="KEGG" id="aps:CFPG_128"/>
<dbReference type="eggNOG" id="COG1160">
    <property type="taxonomic scope" value="Bacteria"/>
</dbReference>
<dbReference type="HOGENOM" id="CLU_016077_6_2_10"/>
<dbReference type="OrthoDB" id="9805918at2"/>
<dbReference type="Proteomes" id="UP000000723">
    <property type="component" value="Chromosome"/>
</dbReference>
<dbReference type="GO" id="GO:0005525">
    <property type="term" value="F:GTP binding"/>
    <property type="evidence" value="ECO:0007669"/>
    <property type="project" value="UniProtKB-UniRule"/>
</dbReference>
<dbReference type="GO" id="GO:0043022">
    <property type="term" value="F:ribosome binding"/>
    <property type="evidence" value="ECO:0007669"/>
    <property type="project" value="TreeGrafter"/>
</dbReference>
<dbReference type="GO" id="GO:0042254">
    <property type="term" value="P:ribosome biogenesis"/>
    <property type="evidence" value="ECO:0007669"/>
    <property type="project" value="UniProtKB-KW"/>
</dbReference>
<dbReference type="CDD" id="cd01894">
    <property type="entry name" value="EngA1"/>
    <property type="match status" value="1"/>
</dbReference>
<dbReference type="CDD" id="cd01895">
    <property type="entry name" value="EngA2"/>
    <property type="match status" value="1"/>
</dbReference>
<dbReference type="FunFam" id="3.30.300.20:FF:000004">
    <property type="entry name" value="GTPase Der"/>
    <property type="match status" value="1"/>
</dbReference>
<dbReference type="FunFam" id="3.40.50.300:FF:000040">
    <property type="entry name" value="GTPase Der"/>
    <property type="match status" value="1"/>
</dbReference>
<dbReference type="FunFam" id="3.40.50.300:FF:000953">
    <property type="entry name" value="GTPase Der"/>
    <property type="match status" value="1"/>
</dbReference>
<dbReference type="Gene3D" id="3.30.300.20">
    <property type="match status" value="1"/>
</dbReference>
<dbReference type="Gene3D" id="3.40.50.300">
    <property type="entry name" value="P-loop containing nucleotide triphosphate hydrolases"/>
    <property type="match status" value="2"/>
</dbReference>
<dbReference type="HAMAP" id="MF_00195">
    <property type="entry name" value="GTPase_Der"/>
    <property type="match status" value="1"/>
</dbReference>
<dbReference type="InterPro" id="IPR031166">
    <property type="entry name" value="G_ENGA"/>
</dbReference>
<dbReference type="InterPro" id="IPR006073">
    <property type="entry name" value="GTP-bd"/>
</dbReference>
<dbReference type="InterPro" id="IPR016484">
    <property type="entry name" value="GTPase_Der"/>
</dbReference>
<dbReference type="InterPro" id="IPR032859">
    <property type="entry name" value="KH_dom-like"/>
</dbReference>
<dbReference type="InterPro" id="IPR015946">
    <property type="entry name" value="KH_dom-like_a/b"/>
</dbReference>
<dbReference type="InterPro" id="IPR027417">
    <property type="entry name" value="P-loop_NTPase"/>
</dbReference>
<dbReference type="InterPro" id="IPR005225">
    <property type="entry name" value="Small_GTP-bd"/>
</dbReference>
<dbReference type="NCBIfam" id="TIGR03594">
    <property type="entry name" value="GTPase_EngA"/>
    <property type="match status" value="1"/>
</dbReference>
<dbReference type="NCBIfam" id="TIGR00231">
    <property type="entry name" value="small_GTP"/>
    <property type="match status" value="2"/>
</dbReference>
<dbReference type="PANTHER" id="PTHR43834">
    <property type="entry name" value="GTPASE DER"/>
    <property type="match status" value="1"/>
</dbReference>
<dbReference type="PANTHER" id="PTHR43834:SF6">
    <property type="entry name" value="GTPASE DER"/>
    <property type="match status" value="1"/>
</dbReference>
<dbReference type="Pfam" id="PF14714">
    <property type="entry name" value="KH_dom-like"/>
    <property type="match status" value="1"/>
</dbReference>
<dbReference type="Pfam" id="PF01926">
    <property type="entry name" value="MMR_HSR1"/>
    <property type="match status" value="2"/>
</dbReference>
<dbReference type="PIRSF" id="PIRSF006485">
    <property type="entry name" value="GTP-binding_EngA"/>
    <property type="match status" value="1"/>
</dbReference>
<dbReference type="PRINTS" id="PR00326">
    <property type="entry name" value="GTP1OBG"/>
</dbReference>
<dbReference type="SUPFAM" id="SSF52540">
    <property type="entry name" value="P-loop containing nucleoside triphosphate hydrolases"/>
    <property type="match status" value="2"/>
</dbReference>
<dbReference type="PROSITE" id="PS51712">
    <property type="entry name" value="G_ENGA"/>
    <property type="match status" value="2"/>
</dbReference>
<comment type="function">
    <text evidence="1">GTPase that plays an essential role in the late steps of ribosome biogenesis.</text>
</comment>
<comment type="subunit">
    <text evidence="1">Associates with the 50S ribosomal subunit.</text>
</comment>
<comment type="similarity">
    <text evidence="1">Belongs to the TRAFAC class TrmE-Era-EngA-EngB-Septin-like GTPase superfamily. EngA (Der) GTPase family.</text>
</comment>
<proteinExistence type="inferred from homology"/>
<accession>B6YQB9</accession>
<evidence type="ECO:0000255" key="1">
    <source>
        <dbReference type="HAMAP-Rule" id="MF_00195"/>
    </source>
</evidence>
<reference key="1">
    <citation type="journal article" date="2008" name="Science">
        <title>Genome of an endosymbiont coupling N2 fixation to cellulolysis within RT protist cells in termite gut.</title>
        <authorList>
            <person name="Hongoh Y."/>
            <person name="Sharma V.K."/>
            <person name="Prakash T."/>
            <person name="Noda S."/>
            <person name="Toh H."/>
            <person name="Taylor T.D."/>
            <person name="Kudo T."/>
            <person name="Sakaki Y."/>
            <person name="Toyoda A."/>
            <person name="Hattori M."/>
            <person name="Ohkuma M."/>
        </authorList>
    </citation>
    <scope>NUCLEOTIDE SEQUENCE [LARGE SCALE GENOMIC DNA]</scope>
</reference>